<evidence type="ECO:0000255" key="1">
    <source>
        <dbReference type="HAMAP-Rule" id="MF_00446"/>
    </source>
</evidence>
<feature type="chain" id="PRO_1000080908" description="Aspartate 1-decarboxylase beta chain" evidence="1">
    <location>
        <begin position="1"/>
        <end position="24"/>
    </location>
</feature>
<feature type="chain" id="PRO_1000080909" description="Aspartate 1-decarboxylase alpha chain" evidence="1">
    <location>
        <begin position="25"/>
        <end position="131"/>
    </location>
</feature>
<feature type="active site" description="Schiff-base intermediate with substrate; via pyruvic acid" evidence="1">
    <location>
        <position position="25"/>
    </location>
</feature>
<feature type="active site" description="Proton donor" evidence="1">
    <location>
        <position position="58"/>
    </location>
</feature>
<feature type="binding site" evidence="1">
    <location>
        <position position="57"/>
    </location>
    <ligand>
        <name>substrate</name>
    </ligand>
</feature>
<feature type="binding site" evidence="1">
    <location>
        <begin position="73"/>
        <end position="75"/>
    </location>
    <ligand>
        <name>substrate</name>
    </ligand>
</feature>
<feature type="modified residue" description="Pyruvic acid (Ser)" evidence="1">
    <location>
        <position position="25"/>
    </location>
</feature>
<proteinExistence type="inferred from homology"/>
<reference key="1">
    <citation type="journal article" date="2008" name="Proc. Natl. Acad. Sci. U.S.A.">
        <title>Niche adaptation and genome expansion in the chlorophyll d-producing cyanobacterium Acaryochloris marina.</title>
        <authorList>
            <person name="Swingley W.D."/>
            <person name="Chen M."/>
            <person name="Cheung P.C."/>
            <person name="Conrad A.L."/>
            <person name="Dejesa L.C."/>
            <person name="Hao J."/>
            <person name="Honchak B.M."/>
            <person name="Karbach L.E."/>
            <person name="Kurdoglu A."/>
            <person name="Lahiri S."/>
            <person name="Mastrian S.D."/>
            <person name="Miyashita H."/>
            <person name="Page L."/>
            <person name="Ramakrishna P."/>
            <person name="Satoh S."/>
            <person name="Sattley W.M."/>
            <person name="Shimada Y."/>
            <person name="Taylor H.L."/>
            <person name="Tomo T."/>
            <person name="Tsuchiya T."/>
            <person name="Wang Z.T."/>
            <person name="Raymond J."/>
            <person name="Mimuro M."/>
            <person name="Blankenship R.E."/>
            <person name="Touchman J.W."/>
        </authorList>
    </citation>
    <scope>NUCLEOTIDE SEQUENCE [LARGE SCALE GENOMIC DNA]</scope>
    <source>
        <strain>MBIC 11017</strain>
    </source>
</reference>
<sequence length="131" mass="14315">MHRTFLFSKIHHCTLTETNLEYVGSISIDQTLLDAAGIVPYEQVQVVNMNNGERLVTYAIPAPADSGAVELNGAAARLGTRGDRVIIMTYAQLTSEEIEGFEPRVVLVDQENRVIEDAPVVNASTPELCLT</sequence>
<dbReference type="EC" id="4.1.1.11" evidence="1"/>
<dbReference type="EMBL" id="CP000828">
    <property type="protein sequence ID" value="ABW27368.1"/>
    <property type="molecule type" value="Genomic_DNA"/>
</dbReference>
<dbReference type="RefSeq" id="WP_012162840.1">
    <property type="nucleotide sequence ID" value="NC_009925.1"/>
</dbReference>
<dbReference type="SMR" id="B0C321"/>
<dbReference type="STRING" id="329726.AM1_2358"/>
<dbReference type="KEGG" id="amr:AM1_2358"/>
<dbReference type="eggNOG" id="COG0853">
    <property type="taxonomic scope" value="Bacteria"/>
</dbReference>
<dbReference type="HOGENOM" id="CLU_115305_2_0_3"/>
<dbReference type="OrthoDB" id="9803983at2"/>
<dbReference type="UniPathway" id="UPA00028">
    <property type="reaction ID" value="UER00002"/>
</dbReference>
<dbReference type="Proteomes" id="UP000000268">
    <property type="component" value="Chromosome"/>
</dbReference>
<dbReference type="GO" id="GO:0005829">
    <property type="term" value="C:cytosol"/>
    <property type="evidence" value="ECO:0007669"/>
    <property type="project" value="TreeGrafter"/>
</dbReference>
<dbReference type="GO" id="GO:0004068">
    <property type="term" value="F:aspartate 1-decarboxylase activity"/>
    <property type="evidence" value="ECO:0007669"/>
    <property type="project" value="UniProtKB-UniRule"/>
</dbReference>
<dbReference type="GO" id="GO:0006523">
    <property type="term" value="P:alanine biosynthetic process"/>
    <property type="evidence" value="ECO:0007669"/>
    <property type="project" value="InterPro"/>
</dbReference>
<dbReference type="GO" id="GO:0015940">
    <property type="term" value="P:pantothenate biosynthetic process"/>
    <property type="evidence" value="ECO:0007669"/>
    <property type="project" value="UniProtKB-UniRule"/>
</dbReference>
<dbReference type="CDD" id="cd06919">
    <property type="entry name" value="Asp_decarbox"/>
    <property type="match status" value="1"/>
</dbReference>
<dbReference type="Gene3D" id="2.40.40.20">
    <property type="match status" value="1"/>
</dbReference>
<dbReference type="HAMAP" id="MF_00446">
    <property type="entry name" value="PanD"/>
    <property type="match status" value="1"/>
</dbReference>
<dbReference type="InterPro" id="IPR009010">
    <property type="entry name" value="Asp_de-COase-like_dom_sf"/>
</dbReference>
<dbReference type="InterPro" id="IPR003190">
    <property type="entry name" value="Asp_decarbox"/>
</dbReference>
<dbReference type="NCBIfam" id="TIGR00223">
    <property type="entry name" value="panD"/>
    <property type="match status" value="1"/>
</dbReference>
<dbReference type="PANTHER" id="PTHR21012">
    <property type="entry name" value="ASPARTATE 1-DECARBOXYLASE"/>
    <property type="match status" value="1"/>
</dbReference>
<dbReference type="PANTHER" id="PTHR21012:SF0">
    <property type="entry name" value="ASPARTATE 1-DECARBOXYLASE"/>
    <property type="match status" value="1"/>
</dbReference>
<dbReference type="Pfam" id="PF02261">
    <property type="entry name" value="Asp_decarbox"/>
    <property type="match status" value="1"/>
</dbReference>
<dbReference type="PIRSF" id="PIRSF006246">
    <property type="entry name" value="Asp_decarbox"/>
    <property type="match status" value="1"/>
</dbReference>
<dbReference type="SUPFAM" id="SSF50692">
    <property type="entry name" value="ADC-like"/>
    <property type="match status" value="1"/>
</dbReference>
<gene>
    <name evidence="1" type="primary">panD</name>
    <name type="ordered locus">AM1_2358</name>
</gene>
<comment type="function">
    <text evidence="1">Catalyzes the pyruvoyl-dependent decarboxylation of aspartate to produce beta-alanine.</text>
</comment>
<comment type="catalytic activity">
    <reaction evidence="1">
        <text>L-aspartate + H(+) = beta-alanine + CO2</text>
        <dbReference type="Rhea" id="RHEA:19497"/>
        <dbReference type="ChEBI" id="CHEBI:15378"/>
        <dbReference type="ChEBI" id="CHEBI:16526"/>
        <dbReference type="ChEBI" id="CHEBI:29991"/>
        <dbReference type="ChEBI" id="CHEBI:57966"/>
        <dbReference type="EC" id="4.1.1.11"/>
    </reaction>
</comment>
<comment type="cofactor">
    <cofactor evidence="1">
        <name>pyruvate</name>
        <dbReference type="ChEBI" id="CHEBI:15361"/>
    </cofactor>
    <text evidence="1">Binds 1 pyruvoyl group covalently per subunit.</text>
</comment>
<comment type="pathway">
    <text evidence="1">Cofactor biosynthesis; (R)-pantothenate biosynthesis; beta-alanine from L-aspartate: step 1/1.</text>
</comment>
<comment type="subunit">
    <text evidence="1">Heterooctamer of four alpha and four beta subunits.</text>
</comment>
<comment type="subcellular location">
    <subcellularLocation>
        <location evidence="1">Cytoplasm</location>
    </subcellularLocation>
</comment>
<comment type="PTM">
    <text evidence="1">Is synthesized initially as an inactive proenzyme, which is activated by self-cleavage at a specific serine bond to produce a beta-subunit with a hydroxyl group at its C-terminus and an alpha-subunit with a pyruvoyl group at its N-terminus.</text>
</comment>
<comment type="similarity">
    <text evidence="1">Belongs to the PanD family.</text>
</comment>
<name>PAND_ACAM1</name>
<keyword id="KW-0068">Autocatalytic cleavage</keyword>
<keyword id="KW-0963">Cytoplasm</keyword>
<keyword id="KW-0210">Decarboxylase</keyword>
<keyword id="KW-0456">Lyase</keyword>
<keyword id="KW-0566">Pantothenate biosynthesis</keyword>
<keyword id="KW-0670">Pyruvate</keyword>
<keyword id="KW-1185">Reference proteome</keyword>
<keyword id="KW-0704">Schiff base</keyword>
<keyword id="KW-0865">Zymogen</keyword>
<protein>
    <recommendedName>
        <fullName evidence="1">Aspartate 1-decarboxylase</fullName>
        <ecNumber evidence="1">4.1.1.11</ecNumber>
    </recommendedName>
    <alternativeName>
        <fullName evidence="1">Aspartate alpha-decarboxylase</fullName>
    </alternativeName>
    <component>
        <recommendedName>
            <fullName evidence="1">Aspartate 1-decarboxylase beta chain</fullName>
        </recommendedName>
    </component>
    <component>
        <recommendedName>
            <fullName evidence="1">Aspartate 1-decarboxylase alpha chain</fullName>
        </recommendedName>
    </component>
</protein>
<accession>B0C321</accession>
<organism>
    <name type="scientific">Acaryochloris marina (strain MBIC 11017)</name>
    <dbReference type="NCBI Taxonomy" id="329726"/>
    <lineage>
        <taxon>Bacteria</taxon>
        <taxon>Bacillati</taxon>
        <taxon>Cyanobacteriota</taxon>
        <taxon>Cyanophyceae</taxon>
        <taxon>Acaryochloridales</taxon>
        <taxon>Acaryochloridaceae</taxon>
        <taxon>Acaryochloris</taxon>
    </lineage>
</organism>